<protein>
    <recommendedName>
        <fullName evidence="1">UPF0060 membrane protein YnfA</fullName>
    </recommendedName>
</protein>
<keyword id="KW-0997">Cell inner membrane</keyword>
<keyword id="KW-1003">Cell membrane</keyword>
<keyword id="KW-0472">Membrane</keyword>
<keyword id="KW-1185">Reference proteome</keyword>
<keyword id="KW-0812">Transmembrane</keyword>
<keyword id="KW-1133">Transmembrane helix</keyword>
<organism>
    <name type="scientific">Escherichia coli O1:K1 / APEC</name>
    <dbReference type="NCBI Taxonomy" id="405955"/>
    <lineage>
        <taxon>Bacteria</taxon>
        <taxon>Pseudomonadati</taxon>
        <taxon>Pseudomonadota</taxon>
        <taxon>Gammaproteobacteria</taxon>
        <taxon>Enterobacterales</taxon>
        <taxon>Enterobacteriaceae</taxon>
        <taxon>Escherichia</taxon>
    </lineage>
</organism>
<proteinExistence type="inferred from homology"/>
<comment type="subcellular location">
    <subcellularLocation>
        <location evidence="1">Cell inner membrane</location>
        <topology evidence="1">Multi-pass membrane protein</topology>
    </subcellularLocation>
</comment>
<comment type="similarity">
    <text evidence="1">Belongs to the UPF0060 family.</text>
</comment>
<comment type="sequence caution" evidence="2">
    <conflict type="erroneous initiation">
        <sequence resource="EMBL-CDS" id="ABJ00967"/>
    </conflict>
</comment>
<reference key="1">
    <citation type="journal article" date="2007" name="J. Bacteriol.">
        <title>The genome sequence of avian pathogenic Escherichia coli strain O1:K1:H7 shares strong similarities with human extraintestinal pathogenic E. coli genomes.</title>
        <authorList>
            <person name="Johnson T.J."/>
            <person name="Kariyawasam S."/>
            <person name="Wannemuehler Y."/>
            <person name="Mangiamele P."/>
            <person name="Johnson S.J."/>
            <person name="Doetkott C."/>
            <person name="Skyberg J.A."/>
            <person name="Lynne A.M."/>
            <person name="Johnson J.R."/>
            <person name="Nolan L.K."/>
        </authorList>
    </citation>
    <scope>NUCLEOTIDE SEQUENCE [LARGE SCALE GENOMIC DNA]</scope>
</reference>
<dbReference type="EMBL" id="CP000468">
    <property type="protein sequence ID" value="ABJ00967.1"/>
    <property type="status" value="ALT_INIT"/>
    <property type="molecule type" value="Genomic_DNA"/>
</dbReference>
<dbReference type="RefSeq" id="WP_001304355.1">
    <property type="nucleotide sequence ID" value="NZ_CADILS010000002.1"/>
</dbReference>
<dbReference type="SMR" id="A1ABC7"/>
<dbReference type="KEGG" id="ecv:APECO1_665"/>
<dbReference type="HOGENOM" id="CLU_117653_2_1_6"/>
<dbReference type="Proteomes" id="UP000008216">
    <property type="component" value="Chromosome"/>
</dbReference>
<dbReference type="GO" id="GO:0005886">
    <property type="term" value="C:plasma membrane"/>
    <property type="evidence" value="ECO:0007669"/>
    <property type="project" value="UniProtKB-SubCell"/>
</dbReference>
<dbReference type="HAMAP" id="MF_00010">
    <property type="entry name" value="UPF0060"/>
    <property type="match status" value="1"/>
</dbReference>
<dbReference type="InterPro" id="IPR003844">
    <property type="entry name" value="UPF0060"/>
</dbReference>
<dbReference type="NCBIfam" id="NF002586">
    <property type="entry name" value="PRK02237.1"/>
    <property type="match status" value="1"/>
</dbReference>
<dbReference type="PANTHER" id="PTHR36116">
    <property type="entry name" value="UPF0060 MEMBRANE PROTEIN YNFA"/>
    <property type="match status" value="1"/>
</dbReference>
<dbReference type="PANTHER" id="PTHR36116:SF1">
    <property type="entry name" value="UPF0060 MEMBRANE PROTEIN YNFA"/>
    <property type="match status" value="1"/>
</dbReference>
<dbReference type="Pfam" id="PF02694">
    <property type="entry name" value="UPF0060"/>
    <property type="match status" value="1"/>
</dbReference>
<dbReference type="SUPFAM" id="SSF103481">
    <property type="entry name" value="Multidrug resistance efflux transporter EmrE"/>
    <property type="match status" value="1"/>
</dbReference>
<accession>A1ABC7</accession>
<name>YNFA_ECOK1</name>
<evidence type="ECO:0000255" key="1">
    <source>
        <dbReference type="HAMAP-Rule" id="MF_00010"/>
    </source>
</evidence>
<evidence type="ECO:0000305" key="2"/>
<sequence length="108" mass="11901">MIKTTLLFFATALCEIIGCFLPWLWLKRNASIWLLLPAGISLALFVWLLTLHPAASGRVYAAYGGVYVCTALIWLRVVDGVKLTLYDWTGALIALCGMLIIVAGWGRT</sequence>
<gene>
    <name evidence="1" type="primary">ynfA</name>
    <name type="ordered locus">Ecok1_14730</name>
    <name type="ORF">APECO1_665</name>
</gene>
<feature type="chain" id="PRO_0000282223" description="UPF0060 membrane protein YnfA">
    <location>
        <begin position="1"/>
        <end position="108"/>
    </location>
</feature>
<feature type="topological domain" description="Periplasmic" evidence="1">
    <location>
        <begin position="1"/>
        <end position="5"/>
    </location>
</feature>
<feature type="transmembrane region" description="Helical" evidence="1">
    <location>
        <begin position="6"/>
        <end position="26"/>
    </location>
</feature>
<feature type="topological domain" description="Cytoplasmic" evidence="1">
    <location>
        <begin position="27"/>
        <end position="30"/>
    </location>
</feature>
<feature type="transmembrane region" description="Helical" evidence="1">
    <location>
        <begin position="31"/>
        <end position="51"/>
    </location>
</feature>
<feature type="topological domain" description="Periplasmic" evidence="1">
    <location>
        <begin position="52"/>
        <end position="60"/>
    </location>
</feature>
<feature type="transmembrane region" description="Helical" evidence="1">
    <location>
        <begin position="61"/>
        <end position="81"/>
    </location>
</feature>
<feature type="topological domain" description="Cytoplasmic" evidence="1">
    <location>
        <begin position="82"/>
        <end position="84"/>
    </location>
</feature>
<feature type="transmembrane region" description="Helical" evidence="1">
    <location>
        <begin position="85"/>
        <end position="105"/>
    </location>
</feature>
<feature type="topological domain" description="Periplasmic" evidence="1">
    <location>
        <begin position="106"/>
        <end position="108"/>
    </location>
</feature>